<proteinExistence type="inferred from homology"/>
<feature type="chain" id="PRO_0000128202" description="Pantothenate synthetase">
    <location>
        <begin position="1"/>
        <end position="283"/>
    </location>
</feature>
<feature type="active site" description="Proton donor" evidence="1">
    <location>
        <position position="37"/>
    </location>
</feature>
<feature type="binding site" evidence="1">
    <location>
        <begin position="30"/>
        <end position="37"/>
    </location>
    <ligand>
        <name>ATP</name>
        <dbReference type="ChEBI" id="CHEBI:30616"/>
    </ligand>
</feature>
<feature type="binding site" evidence="1">
    <location>
        <position position="61"/>
    </location>
    <ligand>
        <name>(R)-pantoate</name>
        <dbReference type="ChEBI" id="CHEBI:15980"/>
    </ligand>
</feature>
<feature type="binding site" evidence="1">
    <location>
        <position position="61"/>
    </location>
    <ligand>
        <name>beta-alanine</name>
        <dbReference type="ChEBI" id="CHEBI:57966"/>
    </ligand>
</feature>
<feature type="binding site" evidence="1">
    <location>
        <begin position="147"/>
        <end position="150"/>
    </location>
    <ligand>
        <name>ATP</name>
        <dbReference type="ChEBI" id="CHEBI:30616"/>
    </ligand>
</feature>
<feature type="binding site" evidence="1">
    <location>
        <position position="153"/>
    </location>
    <ligand>
        <name>(R)-pantoate</name>
        <dbReference type="ChEBI" id="CHEBI:15980"/>
    </ligand>
</feature>
<feature type="binding site" evidence="1">
    <location>
        <position position="176"/>
    </location>
    <ligand>
        <name>ATP</name>
        <dbReference type="ChEBI" id="CHEBI:30616"/>
    </ligand>
</feature>
<feature type="binding site" evidence="1">
    <location>
        <begin position="184"/>
        <end position="187"/>
    </location>
    <ligand>
        <name>ATP</name>
        <dbReference type="ChEBI" id="CHEBI:30616"/>
    </ligand>
</feature>
<organism>
    <name type="scientific">Halalkalibacterium halodurans (strain ATCC BAA-125 / DSM 18197 / FERM 7344 / JCM 9153 / C-125)</name>
    <name type="common">Bacillus halodurans</name>
    <dbReference type="NCBI Taxonomy" id="272558"/>
    <lineage>
        <taxon>Bacteria</taxon>
        <taxon>Bacillati</taxon>
        <taxon>Bacillota</taxon>
        <taxon>Bacilli</taxon>
        <taxon>Bacillales</taxon>
        <taxon>Bacillaceae</taxon>
        <taxon>Halalkalibacterium (ex Joshi et al. 2022)</taxon>
    </lineage>
</organism>
<gene>
    <name evidence="1" type="primary">panC</name>
    <name type="ordered locus">BH1688</name>
</gene>
<sequence>MIVCTTISDLQAQLRIEREQKRSVGFVPTMGYLHEGHLSLVKRAKEEHDTVVMSIFVNPLQFGAGEDLDTYPRDFARDEQLAEAEGVDILFYPSTDEMYPRPASVRLKVTQGVDVLCGASRPGHFDGVVTVVLKLFHLVEPDAAYFGLKDAQQVAVITNMVEDLNVGVQIVPCATVREVDGLAKSSRNVRLSEKERKEAPGLYQSLLAGREALDAGEKDAAVIRERIRQSLEERLTGRIDYVEVLSYPRLQKIERIEETVILAVAYQFENARLIDNLIVPYGE</sequence>
<evidence type="ECO:0000255" key="1">
    <source>
        <dbReference type="HAMAP-Rule" id="MF_00158"/>
    </source>
</evidence>
<name>PANC_HALH5</name>
<reference key="1">
    <citation type="journal article" date="2000" name="Nucleic Acids Res.">
        <title>Complete genome sequence of the alkaliphilic bacterium Bacillus halodurans and genomic sequence comparison with Bacillus subtilis.</title>
        <authorList>
            <person name="Takami H."/>
            <person name="Nakasone K."/>
            <person name="Takaki Y."/>
            <person name="Maeno G."/>
            <person name="Sasaki R."/>
            <person name="Masui N."/>
            <person name="Fuji F."/>
            <person name="Hirama C."/>
            <person name="Nakamura Y."/>
            <person name="Ogasawara N."/>
            <person name="Kuhara S."/>
            <person name="Horikoshi K."/>
        </authorList>
    </citation>
    <scope>NUCLEOTIDE SEQUENCE [LARGE SCALE GENOMIC DNA]</scope>
    <source>
        <strain>ATCC BAA-125 / DSM 18197 / FERM 7344 / JCM 9153 / C-125</strain>
    </source>
</reference>
<keyword id="KW-0067">ATP-binding</keyword>
<keyword id="KW-0963">Cytoplasm</keyword>
<keyword id="KW-0436">Ligase</keyword>
<keyword id="KW-0547">Nucleotide-binding</keyword>
<keyword id="KW-0566">Pantothenate biosynthesis</keyword>
<keyword id="KW-1185">Reference proteome</keyword>
<protein>
    <recommendedName>
        <fullName evidence="1">Pantothenate synthetase</fullName>
        <shortName evidence="1">PS</shortName>
        <ecNumber evidence="1">6.3.2.1</ecNumber>
    </recommendedName>
    <alternativeName>
        <fullName evidence="1">Pantoate--beta-alanine ligase</fullName>
    </alternativeName>
    <alternativeName>
        <fullName evidence="1">Pantoate-activating enzyme</fullName>
    </alternativeName>
</protein>
<dbReference type="EC" id="6.3.2.1" evidence="1"/>
<dbReference type="EMBL" id="BA000004">
    <property type="protein sequence ID" value="BAB05407.1"/>
    <property type="molecule type" value="Genomic_DNA"/>
</dbReference>
<dbReference type="PIR" id="H83860">
    <property type="entry name" value="H83860"/>
</dbReference>
<dbReference type="RefSeq" id="WP_010897849.1">
    <property type="nucleotide sequence ID" value="NC_002570.2"/>
</dbReference>
<dbReference type="SMR" id="Q9KC86"/>
<dbReference type="STRING" id="272558.gene:10727586"/>
<dbReference type="GeneID" id="87597305"/>
<dbReference type="KEGG" id="bha:BH1688"/>
<dbReference type="eggNOG" id="COG0414">
    <property type="taxonomic scope" value="Bacteria"/>
</dbReference>
<dbReference type="HOGENOM" id="CLU_047148_0_0_9"/>
<dbReference type="OrthoDB" id="9773087at2"/>
<dbReference type="UniPathway" id="UPA00028">
    <property type="reaction ID" value="UER00005"/>
</dbReference>
<dbReference type="Proteomes" id="UP000001258">
    <property type="component" value="Chromosome"/>
</dbReference>
<dbReference type="GO" id="GO:0005829">
    <property type="term" value="C:cytosol"/>
    <property type="evidence" value="ECO:0007669"/>
    <property type="project" value="TreeGrafter"/>
</dbReference>
<dbReference type="GO" id="GO:0005524">
    <property type="term" value="F:ATP binding"/>
    <property type="evidence" value="ECO:0007669"/>
    <property type="project" value="UniProtKB-KW"/>
</dbReference>
<dbReference type="GO" id="GO:0004592">
    <property type="term" value="F:pantoate-beta-alanine ligase activity"/>
    <property type="evidence" value="ECO:0007669"/>
    <property type="project" value="UniProtKB-UniRule"/>
</dbReference>
<dbReference type="GO" id="GO:0015940">
    <property type="term" value="P:pantothenate biosynthetic process"/>
    <property type="evidence" value="ECO:0007669"/>
    <property type="project" value="UniProtKB-UniRule"/>
</dbReference>
<dbReference type="CDD" id="cd00560">
    <property type="entry name" value="PanC"/>
    <property type="match status" value="1"/>
</dbReference>
<dbReference type="FunFam" id="3.30.1300.10:FF:000001">
    <property type="entry name" value="Pantothenate synthetase"/>
    <property type="match status" value="1"/>
</dbReference>
<dbReference type="FunFam" id="3.40.50.620:FF:000114">
    <property type="entry name" value="Pantothenate synthetase"/>
    <property type="match status" value="1"/>
</dbReference>
<dbReference type="Gene3D" id="3.40.50.620">
    <property type="entry name" value="HUPs"/>
    <property type="match status" value="1"/>
</dbReference>
<dbReference type="Gene3D" id="3.30.1300.10">
    <property type="entry name" value="Pantoate-beta-alanine ligase, C-terminal domain"/>
    <property type="match status" value="1"/>
</dbReference>
<dbReference type="HAMAP" id="MF_00158">
    <property type="entry name" value="PanC"/>
    <property type="match status" value="1"/>
</dbReference>
<dbReference type="InterPro" id="IPR004821">
    <property type="entry name" value="Cyt_trans-like"/>
</dbReference>
<dbReference type="InterPro" id="IPR003721">
    <property type="entry name" value="Pantoate_ligase"/>
</dbReference>
<dbReference type="InterPro" id="IPR042176">
    <property type="entry name" value="Pantoate_ligase_C"/>
</dbReference>
<dbReference type="InterPro" id="IPR014729">
    <property type="entry name" value="Rossmann-like_a/b/a_fold"/>
</dbReference>
<dbReference type="NCBIfam" id="TIGR00125">
    <property type="entry name" value="cyt_tran_rel"/>
    <property type="match status" value="1"/>
</dbReference>
<dbReference type="NCBIfam" id="TIGR00018">
    <property type="entry name" value="panC"/>
    <property type="match status" value="1"/>
</dbReference>
<dbReference type="PANTHER" id="PTHR21299">
    <property type="entry name" value="CYTIDYLATE KINASE/PANTOATE-BETA-ALANINE LIGASE"/>
    <property type="match status" value="1"/>
</dbReference>
<dbReference type="PANTHER" id="PTHR21299:SF1">
    <property type="entry name" value="PANTOATE--BETA-ALANINE LIGASE"/>
    <property type="match status" value="1"/>
</dbReference>
<dbReference type="Pfam" id="PF02569">
    <property type="entry name" value="Pantoate_ligase"/>
    <property type="match status" value="1"/>
</dbReference>
<dbReference type="SUPFAM" id="SSF52374">
    <property type="entry name" value="Nucleotidylyl transferase"/>
    <property type="match status" value="1"/>
</dbReference>
<comment type="function">
    <text evidence="1">Catalyzes the condensation of pantoate with beta-alanine in an ATP-dependent reaction via a pantoyl-adenylate intermediate.</text>
</comment>
<comment type="catalytic activity">
    <reaction evidence="1">
        <text>(R)-pantoate + beta-alanine + ATP = (R)-pantothenate + AMP + diphosphate + H(+)</text>
        <dbReference type="Rhea" id="RHEA:10912"/>
        <dbReference type="ChEBI" id="CHEBI:15378"/>
        <dbReference type="ChEBI" id="CHEBI:15980"/>
        <dbReference type="ChEBI" id="CHEBI:29032"/>
        <dbReference type="ChEBI" id="CHEBI:30616"/>
        <dbReference type="ChEBI" id="CHEBI:33019"/>
        <dbReference type="ChEBI" id="CHEBI:57966"/>
        <dbReference type="ChEBI" id="CHEBI:456215"/>
        <dbReference type="EC" id="6.3.2.1"/>
    </reaction>
</comment>
<comment type="pathway">
    <text evidence="1">Cofactor biosynthesis; (R)-pantothenate biosynthesis; (R)-pantothenate from (R)-pantoate and beta-alanine: step 1/1.</text>
</comment>
<comment type="subunit">
    <text evidence="1">Homodimer.</text>
</comment>
<comment type="subcellular location">
    <subcellularLocation>
        <location evidence="1">Cytoplasm</location>
    </subcellularLocation>
</comment>
<comment type="miscellaneous">
    <text evidence="1">The reaction proceeds by a bi uni uni bi ping pong mechanism.</text>
</comment>
<comment type="similarity">
    <text evidence="1">Belongs to the pantothenate synthetase family.</text>
</comment>
<accession>Q9KC86</accession>